<protein>
    <recommendedName>
        <fullName>Uncharacterized lipoprotein YqhH</fullName>
    </recommendedName>
</protein>
<evidence type="ECO:0000250" key="1">
    <source>
        <dbReference type="UniProtKB" id="P69776"/>
    </source>
</evidence>
<evidence type="ECO:0000255" key="2">
    <source>
        <dbReference type="PROSITE-ProRule" id="PRU00303"/>
    </source>
</evidence>
<comment type="subcellular location">
    <subcellularLocation>
        <location evidence="1">Cell outer membrane</location>
        <topology evidence="1">Lipid-anchor</topology>
    </subcellularLocation>
    <subcellularLocation>
        <location evidence="1">Cell outer membrane</location>
        <topology evidence="1">Peptidoglycan-anchor</topology>
    </subcellularLocation>
</comment>
<keyword id="KW-0998">Cell outer membrane</keyword>
<keyword id="KW-0449">Lipoprotein</keyword>
<keyword id="KW-0472">Membrane</keyword>
<keyword id="KW-0564">Palmitate</keyword>
<keyword id="KW-0572">Peptidoglycan-anchor</keyword>
<keyword id="KW-1185">Reference proteome</keyword>
<keyword id="KW-0732">Signal</keyword>
<organism>
    <name type="scientific">Escherichia coli (strain K12)</name>
    <dbReference type="NCBI Taxonomy" id="83333"/>
    <lineage>
        <taxon>Bacteria</taxon>
        <taxon>Pseudomonadati</taxon>
        <taxon>Pseudomonadota</taxon>
        <taxon>Gammaproteobacteria</taxon>
        <taxon>Enterobacterales</taxon>
        <taxon>Enterobacteriaceae</taxon>
        <taxon>Escherichia</taxon>
    </lineage>
</organism>
<gene>
    <name type="primary">yqhH</name>
    <name type="ordered locus">b3014</name>
    <name type="ordered locus">JW2982</name>
</gene>
<sequence>MKTIFTVGAVVLATCLLSGCVNEQKVNQLASNVQTLNAKIARLEQDMKALRPQIYAAKSEANRANTRLDAQDYFDCLRCLRMYAE</sequence>
<proteinExistence type="inferred from homology"/>
<name>YQHH_ECOLI</name>
<dbReference type="EMBL" id="U28377">
    <property type="protein sequence ID" value="AAA69182.1"/>
    <property type="molecule type" value="Genomic_DNA"/>
</dbReference>
<dbReference type="EMBL" id="U00096">
    <property type="protein sequence ID" value="AAC76050.1"/>
    <property type="molecule type" value="Genomic_DNA"/>
</dbReference>
<dbReference type="EMBL" id="AP009048">
    <property type="protein sequence ID" value="BAE77071.1"/>
    <property type="molecule type" value="Genomic_DNA"/>
</dbReference>
<dbReference type="PIR" id="D65088">
    <property type="entry name" value="D65088"/>
</dbReference>
<dbReference type="RefSeq" id="NP_417487.1">
    <property type="nucleotide sequence ID" value="NC_000913.3"/>
</dbReference>
<dbReference type="RefSeq" id="WP_000848528.1">
    <property type="nucleotide sequence ID" value="NZ_STEB01000001.1"/>
</dbReference>
<dbReference type="SMR" id="P65298"/>
<dbReference type="BioGRID" id="4262364">
    <property type="interactions" value="266"/>
</dbReference>
<dbReference type="FunCoup" id="P65298">
    <property type="interactions" value="30"/>
</dbReference>
<dbReference type="IntAct" id="P65298">
    <property type="interactions" value="2"/>
</dbReference>
<dbReference type="STRING" id="511145.b3014"/>
<dbReference type="PaxDb" id="511145-b3014"/>
<dbReference type="EnsemblBacteria" id="AAC76050">
    <property type="protein sequence ID" value="AAC76050"/>
    <property type="gene ID" value="b3014"/>
</dbReference>
<dbReference type="GeneID" id="75203588"/>
<dbReference type="GeneID" id="946832"/>
<dbReference type="KEGG" id="ecj:JW2982"/>
<dbReference type="KEGG" id="eco:b3014"/>
<dbReference type="KEGG" id="ecoc:C3026_16475"/>
<dbReference type="PATRIC" id="fig|1411691.4.peg.3715"/>
<dbReference type="EchoBASE" id="EB2837"/>
<dbReference type="eggNOG" id="COG4238">
    <property type="taxonomic scope" value="Bacteria"/>
</dbReference>
<dbReference type="HOGENOM" id="CLU_166934_2_1_6"/>
<dbReference type="InParanoid" id="P65298"/>
<dbReference type="OMA" id="CVNEERV"/>
<dbReference type="OrthoDB" id="6571730at2"/>
<dbReference type="PhylomeDB" id="P65298"/>
<dbReference type="BioCyc" id="EcoCyc:G7567-MONOMER"/>
<dbReference type="PRO" id="PR:P65298"/>
<dbReference type="Proteomes" id="UP000000625">
    <property type="component" value="Chromosome"/>
</dbReference>
<dbReference type="GO" id="GO:0009279">
    <property type="term" value="C:cell outer membrane"/>
    <property type="evidence" value="ECO:0007669"/>
    <property type="project" value="UniProtKB-SubCell"/>
</dbReference>
<dbReference type="Gene3D" id="1.20.5.190">
    <property type="match status" value="1"/>
</dbReference>
<dbReference type="InterPro" id="IPR006817">
    <property type="entry name" value="Lipoprotein_leucine-zipper_dom"/>
</dbReference>
<dbReference type="InterPro" id="IPR016367">
    <property type="entry name" value="MOM_Lpp"/>
</dbReference>
<dbReference type="NCBIfam" id="NF007428">
    <property type="entry name" value="PRK09973.1"/>
    <property type="match status" value="1"/>
</dbReference>
<dbReference type="PANTHER" id="PTHR38763:SF1">
    <property type="entry name" value="MAJOR OUTER MEMBRANE LIPOPROTEIN LPP"/>
    <property type="match status" value="1"/>
</dbReference>
<dbReference type="PANTHER" id="PTHR38763">
    <property type="entry name" value="MAJOR OUTER MEMBRANE PROLIPOPROTEIN LPP"/>
    <property type="match status" value="1"/>
</dbReference>
<dbReference type="Pfam" id="PF04728">
    <property type="entry name" value="LPP"/>
    <property type="match status" value="1"/>
</dbReference>
<dbReference type="PIRSF" id="PIRSF002855">
    <property type="entry name" value="Murein-lipoprotein"/>
    <property type="match status" value="1"/>
</dbReference>
<dbReference type="SUPFAM" id="SSF58042">
    <property type="entry name" value="Outer membrane lipoprotein"/>
    <property type="match status" value="1"/>
</dbReference>
<dbReference type="PROSITE" id="PS51257">
    <property type="entry name" value="PROKAR_LIPOPROTEIN"/>
    <property type="match status" value="1"/>
</dbReference>
<accession>P65298</accession>
<accession>Q2M9I5</accession>
<accession>Q46860</accession>
<reference key="1">
    <citation type="journal article" date="1997" name="Science">
        <title>The complete genome sequence of Escherichia coli K-12.</title>
        <authorList>
            <person name="Blattner F.R."/>
            <person name="Plunkett G. III"/>
            <person name="Bloch C.A."/>
            <person name="Perna N.T."/>
            <person name="Burland V."/>
            <person name="Riley M."/>
            <person name="Collado-Vides J."/>
            <person name="Glasner J.D."/>
            <person name="Rode C.K."/>
            <person name="Mayhew G.F."/>
            <person name="Gregor J."/>
            <person name="Davis N.W."/>
            <person name="Kirkpatrick H.A."/>
            <person name="Goeden M.A."/>
            <person name="Rose D.J."/>
            <person name="Mau B."/>
            <person name="Shao Y."/>
        </authorList>
    </citation>
    <scope>NUCLEOTIDE SEQUENCE [LARGE SCALE GENOMIC DNA]</scope>
    <source>
        <strain>K12 / MG1655 / ATCC 47076</strain>
    </source>
</reference>
<reference key="2">
    <citation type="journal article" date="2006" name="Mol. Syst. Biol.">
        <title>Highly accurate genome sequences of Escherichia coli K-12 strains MG1655 and W3110.</title>
        <authorList>
            <person name="Hayashi K."/>
            <person name="Morooka N."/>
            <person name="Yamamoto Y."/>
            <person name="Fujita K."/>
            <person name="Isono K."/>
            <person name="Choi S."/>
            <person name="Ohtsubo E."/>
            <person name="Baba T."/>
            <person name="Wanner B.L."/>
            <person name="Mori H."/>
            <person name="Horiuchi T."/>
        </authorList>
    </citation>
    <scope>NUCLEOTIDE SEQUENCE [LARGE SCALE GENOMIC DNA]</scope>
    <source>
        <strain>K12 / W3110 / ATCC 27325 / DSM 5911</strain>
    </source>
</reference>
<feature type="signal peptide" evidence="2">
    <location>
        <begin position="1"/>
        <end position="19"/>
    </location>
</feature>
<feature type="chain" id="PRO_0000018060" description="Uncharacterized lipoprotein YqhH">
    <location>
        <begin position="20"/>
        <end position="85"/>
    </location>
</feature>
<feature type="lipid moiety-binding region" description="N-palmitoyl cysteine" evidence="2">
    <location>
        <position position="20"/>
    </location>
</feature>
<feature type="lipid moiety-binding region" description="S-diacylglycerol cysteine" evidence="2">
    <location>
        <position position="20"/>
    </location>
</feature>